<organism>
    <name type="scientific">Phaeosphaeria nodorum (strain SN15 / ATCC MYA-4574 / FGSC 10173)</name>
    <name type="common">Glume blotch fungus</name>
    <name type="synonym">Parastagonospora nodorum</name>
    <dbReference type="NCBI Taxonomy" id="321614"/>
    <lineage>
        <taxon>Eukaryota</taxon>
        <taxon>Fungi</taxon>
        <taxon>Dikarya</taxon>
        <taxon>Ascomycota</taxon>
        <taxon>Pezizomycotina</taxon>
        <taxon>Dothideomycetes</taxon>
        <taxon>Pleosporomycetidae</taxon>
        <taxon>Pleosporales</taxon>
        <taxon>Pleosporineae</taxon>
        <taxon>Phaeosphaeriaceae</taxon>
        <taxon>Parastagonospora</taxon>
    </lineage>
</organism>
<proteinExistence type="inferred from homology"/>
<accession>Q0UWA6</accession>
<sequence>MAEQLDMGRLNLNDSQHAPQNGFNGERSAYIPPHLRGRPQGGPPPMNAAPPMMNGGGGVGGSAWGPAPGGPSPAPPARFDGPPPGQMNGGGNWANANAQAFTPRGRDGPQGGGGWGGAAPGKFDPSAYGKPGGGGGGSARGSGDGQWKDGKHVPGPSNPRVERELFGVPNDPSKQQTGINFEKYDDIPVEASGQGVPEPVTRFTNPPLDDHLLSNIELSGYKVPTPVQKYSIPIVMGGRDLMACAQTGSGKTGGFLFPILAQAFQNGPSPPPTAQAGGYGRQRKAYPTSLILAPTRELVSQIFDEARKFAYRSWVRPCVVYGGADIGSQLRQIERGCDLLVATPGRLVDLIERGRISLASIKYLVLDEADRMLDMGFEPQIRRIVEGEDMPPTAGRQTLMFSATFPRDIQMLARDFLKEYIFLSVGRVGSTSENITQKIEYVEDADKRSVLLDILHTHGAGLSLIFVETKRMADSLSDFLINQGFPATSIHGDRTQREREKALEMFRSGRCPILVATAVAARGLDIPNVTHVVNYDLPTDIDDYVHRIGRTGRAGNTGIATAFFNRGNRGVVRDLLDLLKEANQEVPSFLESIAREGSGFGGGGGRGGRGGGRGRGNAATRDVRRMGGGGGAGGFGGGGWGGAPQGGYGGGYGGAPAGGYAPPSGGAYGGGGGGGGGGGYGGGYGNPSGPGGNSWW</sequence>
<protein>
    <recommendedName>
        <fullName>ATP-dependent RNA helicase DED1</fullName>
        <ecNumber>3.6.4.13</ecNumber>
    </recommendedName>
</protein>
<keyword id="KW-0067">ATP-binding</keyword>
<keyword id="KW-0963">Cytoplasm</keyword>
<keyword id="KW-0347">Helicase</keyword>
<keyword id="KW-0378">Hydrolase</keyword>
<keyword id="KW-0396">Initiation factor</keyword>
<keyword id="KW-0547">Nucleotide-binding</keyword>
<keyword id="KW-0648">Protein biosynthesis</keyword>
<keyword id="KW-0694">RNA-binding</keyword>
<feature type="chain" id="PRO_0000255987" description="ATP-dependent RNA helicase DED1">
    <location>
        <begin position="1"/>
        <end position="696"/>
    </location>
</feature>
<feature type="domain" description="Helicase ATP-binding" evidence="2">
    <location>
        <begin position="232"/>
        <end position="423"/>
    </location>
</feature>
<feature type="domain" description="Helicase C-terminal" evidence="3">
    <location>
        <begin position="434"/>
        <end position="594"/>
    </location>
</feature>
<feature type="region of interest" description="Disordered" evidence="4">
    <location>
        <begin position="1"/>
        <end position="178"/>
    </location>
</feature>
<feature type="region of interest" description="Disordered" evidence="4">
    <location>
        <begin position="597"/>
        <end position="622"/>
    </location>
</feature>
<feature type="region of interest" description="Disordered" evidence="4">
    <location>
        <begin position="659"/>
        <end position="696"/>
    </location>
</feature>
<feature type="short sequence motif" description="Q motif">
    <location>
        <begin position="201"/>
        <end position="229"/>
    </location>
</feature>
<feature type="short sequence motif" description="DEAD box">
    <location>
        <begin position="367"/>
        <end position="370"/>
    </location>
</feature>
<feature type="compositionally biased region" description="Polar residues" evidence="4">
    <location>
        <begin position="12"/>
        <end position="23"/>
    </location>
</feature>
<feature type="compositionally biased region" description="Gly residues" evidence="4">
    <location>
        <begin position="54"/>
        <end position="63"/>
    </location>
</feature>
<feature type="compositionally biased region" description="Pro residues" evidence="4">
    <location>
        <begin position="68"/>
        <end position="85"/>
    </location>
</feature>
<feature type="compositionally biased region" description="Gly residues" evidence="4">
    <location>
        <begin position="108"/>
        <end position="119"/>
    </location>
</feature>
<feature type="compositionally biased region" description="Gly residues" evidence="4">
    <location>
        <begin position="130"/>
        <end position="144"/>
    </location>
</feature>
<feature type="compositionally biased region" description="Gly residues" evidence="4">
    <location>
        <begin position="598"/>
        <end position="615"/>
    </location>
</feature>
<feature type="compositionally biased region" description="Gly residues" evidence="4">
    <location>
        <begin position="666"/>
        <end position="696"/>
    </location>
</feature>
<feature type="binding site" evidence="2">
    <location>
        <begin position="245"/>
        <end position="252"/>
    </location>
    <ligand>
        <name>ATP</name>
        <dbReference type="ChEBI" id="CHEBI:30616"/>
    </ligand>
</feature>
<name>DED1_PHANO</name>
<reference key="1">
    <citation type="journal article" date="2007" name="Plant Cell">
        <title>Dothideomycete-plant interactions illuminated by genome sequencing and EST analysis of the wheat pathogen Stagonospora nodorum.</title>
        <authorList>
            <person name="Hane J.K."/>
            <person name="Lowe R.G.T."/>
            <person name="Solomon P.S."/>
            <person name="Tan K.-C."/>
            <person name="Schoch C.L."/>
            <person name="Spatafora J.W."/>
            <person name="Crous P.W."/>
            <person name="Kodira C.D."/>
            <person name="Birren B.W."/>
            <person name="Galagan J.E."/>
            <person name="Torriani S.F.F."/>
            <person name="McDonald B.A."/>
            <person name="Oliver R.P."/>
        </authorList>
    </citation>
    <scope>NUCLEOTIDE SEQUENCE [LARGE SCALE GENOMIC DNA]</scope>
    <source>
        <strain>SN15 / ATCC MYA-4574 / FGSC 10173</strain>
    </source>
</reference>
<evidence type="ECO:0000250" key="1"/>
<evidence type="ECO:0000255" key="2">
    <source>
        <dbReference type="PROSITE-ProRule" id="PRU00541"/>
    </source>
</evidence>
<evidence type="ECO:0000255" key="3">
    <source>
        <dbReference type="PROSITE-ProRule" id="PRU00542"/>
    </source>
</evidence>
<evidence type="ECO:0000256" key="4">
    <source>
        <dbReference type="SAM" id="MobiDB-lite"/>
    </source>
</evidence>
<evidence type="ECO:0000305" key="5"/>
<gene>
    <name type="primary">DED1</name>
    <name type="ORF">SNOG_03958</name>
</gene>
<dbReference type="EC" id="3.6.4.13"/>
<dbReference type="EMBL" id="CH445329">
    <property type="protein sequence ID" value="EAT89163.2"/>
    <property type="status" value="ALT_SEQ"/>
    <property type="molecule type" value="Genomic_DNA"/>
</dbReference>
<dbReference type="RefSeq" id="XP_001794501.1">
    <property type="nucleotide sequence ID" value="XM_001794449.1"/>
</dbReference>
<dbReference type="SMR" id="Q0UWA6"/>
<dbReference type="FunCoup" id="Q0UWA6">
    <property type="interactions" value="1187"/>
</dbReference>
<dbReference type="STRING" id="321614.Q0UWA6"/>
<dbReference type="GeneID" id="5971364"/>
<dbReference type="KEGG" id="pno:SNOG_03958"/>
<dbReference type="VEuPathDB" id="FungiDB:JI435_039580"/>
<dbReference type="eggNOG" id="KOG0335">
    <property type="taxonomic scope" value="Eukaryota"/>
</dbReference>
<dbReference type="InParanoid" id="Q0UWA6"/>
<dbReference type="OMA" id="CYRSWVR"/>
<dbReference type="OrthoDB" id="196131at2759"/>
<dbReference type="Proteomes" id="UP000001055">
    <property type="component" value="Unassembled WGS sequence"/>
</dbReference>
<dbReference type="GO" id="GO:0005737">
    <property type="term" value="C:cytoplasm"/>
    <property type="evidence" value="ECO:0007669"/>
    <property type="project" value="UniProtKB-SubCell"/>
</dbReference>
<dbReference type="GO" id="GO:0005634">
    <property type="term" value="C:nucleus"/>
    <property type="evidence" value="ECO:0000318"/>
    <property type="project" value="GO_Central"/>
</dbReference>
<dbReference type="GO" id="GO:0005524">
    <property type="term" value="F:ATP binding"/>
    <property type="evidence" value="ECO:0007669"/>
    <property type="project" value="UniProtKB-KW"/>
</dbReference>
<dbReference type="GO" id="GO:0016887">
    <property type="term" value="F:ATP hydrolysis activity"/>
    <property type="evidence" value="ECO:0007669"/>
    <property type="project" value="RHEA"/>
</dbReference>
<dbReference type="GO" id="GO:0003729">
    <property type="term" value="F:mRNA binding"/>
    <property type="evidence" value="ECO:0000318"/>
    <property type="project" value="GO_Central"/>
</dbReference>
<dbReference type="GO" id="GO:0003724">
    <property type="term" value="F:RNA helicase activity"/>
    <property type="evidence" value="ECO:0000318"/>
    <property type="project" value="GO_Central"/>
</dbReference>
<dbReference type="GO" id="GO:0003743">
    <property type="term" value="F:translation initiation factor activity"/>
    <property type="evidence" value="ECO:0007669"/>
    <property type="project" value="UniProtKB-KW"/>
</dbReference>
<dbReference type="CDD" id="cd18787">
    <property type="entry name" value="SF2_C_DEAD"/>
    <property type="match status" value="1"/>
</dbReference>
<dbReference type="FunFam" id="3.40.50.300:FF:000160">
    <property type="entry name" value="ATP-dependent RNA helicase DDX3X"/>
    <property type="match status" value="1"/>
</dbReference>
<dbReference type="FunFam" id="3.40.50.300:FF:000008">
    <property type="entry name" value="ATP-dependent RNA helicase RhlB"/>
    <property type="match status" value="1"/>
</dbReference>
<dbReference type="Gene3D" id="3.40.50.300">
    <property type="entry name" value="P-loop containing nucleotide triphosphate hydrolases"/>
    <property type="match status" value="2"/>
</dbReference>
<dbReference type="InterPro" id="IPR011545">
    <property type="entry name" value="DEAD/DEAH_box_helicase_dom"/>
</dbReference>
<dbReference type="InterPro" id="IPR014001">
    <property type="entry name" value="Helicase_ATP-bd"/>
</dbReference>
<dbReference type="InterPro" id="IPR001650">
    <property type="entry name" value="Helicase_C-like"/>
</dbReference>
<dbReference type="InterPro" id="IPR027417">
    <property type="entry name" value="P-loop_NTPase"/>
</dbReference>
<dbReference type="InterPro" id="IPR000629">
    <property type="entry name" value="RNA-helicase_DEAD-box_CS"/>
</dbReference>
<dbReference type="InterPro" id="IPR014014">
    <property type="entry name" value="RNA_helicase_DEAD_Q_motif"/>
</dbReference>
<dbReference type="PANTHER" id="PTHR47958">
    <property type="entry name" value="ATP-DEPENDENT RNA HELICASE DBP3"/>
    <property type="match status" value="1"/>
</dbReference>
<dbReference type="Pfam" id="PF00270">
    <property type="entry name" value="DEAD"/>
    <property type="match status" value="1"/>
</dbReference>
<dbReference type="Pfam" id="PF00271">
    <property type="entry name" value="Helicase_C"/>
    <property type="match status" value="1"/>
</dbReference>
<dbReference type="SMART" id="SM00487">
    <property type="entry name" value="DEXDc"/>
    <property type="match status" value="1"/>
</dbReference>
<dbReference type="SMART" id="SM00490">
    <property type="entry name" value="HELICc"/>
    <property type="match status" value="1"/>
</dbReference>
<dbReference type="SUPFAM" id="SSF52540">
    <property type="entry name" value="P-loop containing nucleoside triphosphate hydrolases"/>
    <property type="match status" value="1"/>
</dbReference>
<dbReference type="PROSITE" id="PS00039">
    <property type="entry name" value="DEAD_ATP_HELICASE"/>
    <property type="match status" value="1"/>
</dbReference>
<dbReference type="PROSITE" id="PS51192">
    <property type="entry name" value="HELICASE_ATP_BIND_1"/>
    <property type="match status" value="1"/>
</dbReference>
<dbReference type="PROSITE" id="PS51194">
    <property type="entry name" value="HELICASE_CTER"/>
    <property type="match status" value="1"/>
</dbReference>
<dbReference type="PROSITE" id="PS51195">
    <property type="entry name" value="Q_MOTIF"/>
    <property type="match status" value="1"/>
</dbReference>
<comment type="function">
    <text evidence="1">ATP-binding RNA helicase involved in translation initiation. Remodels RNA in response to ADP and ATP concentrations by facilitating disruption, but also formation of RNA duplexes (By similarity).</text>
</comment>
<comment type="catalytic activity">
    <reaction>
        <text>ATP + H2O = ADP + phosphate + H(+)</text>
        <dbReference type="Rhea" id="RHEA:13065"/>
        <dbReference type="ChEBI" id="CHEBI:15377"/>
        <dbReference type="ChEBI" id="CHEBI:15378"/>
        <dbReference type="ChEBI" id="CHEBI:30616"/>
        <dbReference type="ChEBI" id="CHEBI:43474"/>
        <dbReference type="ChEBI" id="CHEBI:456216"/>
        <dbReference type="EC" id="3.6.4.13"/>
    </reaction>
</comment>
<comment type="subcellular location">
    <subcellularLocation>
        <location evidence="1">Cytoplasm</location>
    </subcellularLocation>
</comment>
<comment type="domain">
    <text>The Q motif is unique to and characteristic of the DEAD box family of RNA helicases and controls ATP binding and hydrolysis.</text>
</comment>
<comment type="similarity">
    <text evidence="5">Belongs to the DEAD box helicase family. DDX3/DED1 subfamily.</text>
</comment>
<comment type="sequence caution" evidence="5">
    <conflict type="erroneous gene model prediction">
        <sequence resource="EMBL-CDS" id="EAT89163"/>
    </conflict>
</comment>